<organism>
    <name type="scientific">Brucella melitensis biotype 2 (strain ATCC 23457)</name>
    <dbReference type="NCBI Taxonomy" id="546272"/>
    <lineage>
        <taxon>Bacteria</taxon>
        <taxon>Pseudomonadati</taxon>
        <taxon>Pseudomonadota</taxon>
        <taxon>Alphaproteobacteria</taxon>
        <taxon>Hyphomicrobiales</taxon>
        <taxon>Brucellaceae</taxon>
        <taxon>Brucella/Ochrobactrum group</taxon>
        <taxon>Brucella</taxon>
    </lineage>
</organism>
<name>RL34_BRUMB</name>
<proteinExistence type="inferred from homology"/>
<feature type="chain" id="PRO_1000134429" description="Large ribosomal subunit protein bL34">
    <location>
        <begin position="1"/>
        <end position="44"/>
    </location>
</feature>
<gene>
    <name evidence="1" type="primary">rpmH</name>
    <name type="ordered locus">BMEA_B1007</name>
</gene>
<protein>
    <recommendedName>
        <fullName evidence="1">Large ribosomal subunit protein bL34</fullName>
    </recommendedName>
    <alternativeName>
        <fullName evidence="2">50S ribosomal protein L34</fullName>
    </alternativeName>
</protein>
<reference key="1">
    <citation type="submission" date="2009-03" db="EMBL/GenBank/DDBJ databases">
        <title>Brucella melitensis ATCC 23457 whole genome shotgun sequencing project.</title>
        <authorList>
            <person name="Setubal J.C."/>
            <person name="Boyle S."/>
            <person name="Crasta O.R."/>
            <person name="Gillespie J.J."/>
            <person name="Kenyon R.W."/>
            <person name="Lu J."/>
            <person name="Mane S."/>
            <person name="Nagrani S."/>
            <person name="Shallom J.M."/>
            <person name="Shallom S."/>
            <person name="Shukla M."/>
            <person name="Snyder E.E."/>
            <person name="Sobral B.W."/>
            <person name="Wattam A.R."/>
            <person name="Will R."/>
            <person name="Williams K."/>
            <person name="Yoo H."/>
            <person name="Munk C."/>
            <person name="Tapia R."/>
            <person name="Han C."/>
            <person name="Detter J.C."/>
            <person name="Bruce D."/>
            <person name="Brettin T.S."/>
        </authorList>
    </citation>
    <scope>NUCLEOTIDE SEQUENCE [LARGE SCALE GENOMIC DNA]</scope>
    <source>
        <strain>ATCC 23457</strain>
    </source>
</reference>
<dbReference type="EMBL" id="CP001489">
    <property type="protein sequence ID" value="ACO02794.1"/>
    <property type="molecule type" value="Genomic_DNA"/>
</dbReference>
<dbReference type="RefSeq" id="WP_002965629.1">
    <property type="nucleotide sequence ID" value="NC_012442.1"/>
</dbReference>
<dbReference type="SMR" id="C0RMG1"/>
<dbReference type="GeneID" id="97534928"/>
<dbReference type="KEGG" id="bmi:BMEA_B1007"/>
<dbReference type="HOGENOM" id="CLU_129938_2_0_5"/>
<dbReference type="Proteomes" id="UP000001748">
    <property type="component" value="Chromosome II"/>
</dbReference>
<dbReference type="GO" id="GO:1990904">
    <property type="term" value="C:ribonucleoprotein complex"/>
    <property type="evidence" value="ECO:0007669"/>
    <property type="project" value="UniProtKB-KW"/>
</dbReference>
<dbReference type="GO" id="GO:0005840">
    <property type="term" value="C:ribosome"/>
    <property type="evidence" value="ECO:0007669"/>
    <property type="project" value="UniProtKB-KW"/>
</dbReference>
<dbReference type="GO" id="GO:0003735">
    <property type="term" value="F:structural constituent of ribosome"/>
    <property type="evidence" value="ECO:0007669"/>
    <property type="project" value="InterPro"/>
</dbReference>
<dbReference type="GO" id="GO:0006412">
    <property type="term" value="P:translation"/>
    <property type="evidence" value="ECO:0007669"/>
    <property type="project" value="UniProtKB-UniRule"/>
</dbReference>
<dbReference type="FunFam" id="1.10.287.3980:FF:000001">
    <property type="entry name" value="Mitochondrial ribosomal protein L34"/>
    <property type="match status" value="1"/>
</dbReference>
<dbReference type="Gene3D" id="1.10.287.3980">
    <property type="match status" value="1"/>
</dbReference>
<dbReference type="HAMAP" id="MF_00391">
    <property type="entry name" value="Ribosomal_bL34"/>
    <property type="match status" value="1"/>
</dbReference>
<dbReference type="InterPro" id="IPR000271">
    <property type="entry name" value="Ribosomal_bL34"/>
</dbReference>
<dbReference type="InterPro" id="IPR020939">
    <property type="entry name" value="Ribosomal_bL34_CS"/>
</dbReference>
<dbReference type="NCBIfam" id="TIGR01030">
    <property type="entry name" value="rpmH_bact"/>
    <property type="match status" value="1"/>
</dbReference>
<dbReference type="PANTHER" id="PTHR14503:SF4">
    <property type="entry name" value="LARGE RIBOSOMAL SUBUNIT PROTEIN BL34M"/>
    <property type="match status" value="1"/>
</dbReference>
<dbReference type="PANTHER" id="PTHR14503">
    <property type="entry name" value="MITOCHONDRIAL RIBOSOMAL PROTEIN 34 FAMILY MEMBER"/>
    <property type="match status" value="1"/>
</dbReference>
<dbReference type="Pfam" id="PF00468">
    <property type="entry name" value="Ribosomal_L34"/>
    <property type="match status" value="1"/>
</dbReference>
<dbReference type="PROSITE" id="PS00784">
    <property type="entry name" value="RIBOSOMAL_L34"/>
    <property type="match status" value="1"/>
</dbReference>
<sequence length="44" mass="5168">MKRTYQPSKIVRKRRHGFRARMATTGGRKVLAARRTRGRKRLSA</sequence>
<evidence type="ECO:0000255" key="1">
    <source>
        <dbReference type="HAMAP-Rule" id="MF_00391"/>
    </source>
</evidence>
<evidence type="ECO:0000305" key="2"/>
<accession>C0RMG1</accession>
<keyword id="KW-0687">Ribonucleoprotein</keyword>
<keyword id="KW-0689">Ribosomal protein</keyword>
<comment type="similarity">
    <text evidence="1">Belongs to the bacterial ribosomal protein bL34 family.</text>
</comment>